<accession>Q2SZF7</accession>
<keyword id="KW-0378">Hydrolase</keyword>
<organism>
    <name type="scientific">Burkholderia thailandensis (strain ATCC 700388 / DSM 13276 / CCUG 48851 / CIP 106301 / E264)</name>
    <dbReference type="NCBI Taxonomy" id="271848"/>
    <lineage>
        <taxon>Bacteria</taxon>
        <taxon>Pseudomonadati</taxon>
        <taxon>Pseudomonadota</taxon>
        <taxon>Betaproteobacteria</taxon>
        <taxon>Burkholderiales</taxon>
        <taxon>Burkholderiaceae</taxon>
        <taxon>Burkholderia</taxon>
        <taxon>pseudomallei group</taxon>
    </lineage>
</organism>
<dbReference type="EC" id="3.6.1.-" evidence="1"/>
<dbReference type="EMBL" id="CP000086">
    <property type="protein sequence ID" value="ABC36921.1"/>
    <property type="molecule type" value="Genomic_DNA"/>
</dbReference>
<dbReference type="RefSeq" id="WP_009888929.1">
    <property type="nucleotide sequence ID" value="NZ_CP008785.1"/>
</dbReference>
<dbReference type="SMR" id="Q2SZF7"/>
<dbReference type="GeneID" id="45120897"/>
<dbReference type="KEGG" id="bte:BTH_I1145"/>
<dbReference type="HOGENOM" id="CLU_087195_0_1_4"/>
<dbReference type="Proteomes" id="UP000001930">
    <property type="component" value="Chromosome I"/>
</dbReference>
<dbReference type="GO" id="GO:0016462">
    <property type="term" value="F:pyrophosphatase activity"/>
    <property type="evidence" value="ECO:0007669"/>
    <property type="project" value="UniProtKB-ARBA"/>
</dbReference>
<dbReference type="CDD" id="cd03671">
    <property type="entry name" value="NUDIX_Ap4A_hydrolase_plant_like"/>
    <property type="match status" value="1"/>
</dbReference>
<dbReference type="Gene3D" id="3.90.79.10">
    <property type="entry name" value="Nucleoside Triphosphate Pyrophosphohydrolase"/>
    <property type="match status" value="1"/>
</dbReference>
<dbReference type="HAMAP" id="MF_00298">
    <property type="entry name" value="Nudix_RppH"/>
    <property type="match status" value="1"/>
</dbReference>
<dbReference type="InterPro" id="IPR020476">
    <property type="entry name" value="Nudix_hydrolase"/>
</dbReference>
<dbReference type="InterPro" id="IPR015797">
    <property type="entry name" value="NUDIX_hydrolase-like_dom_sf"/>
</dbReference>
<dbReference type="InterPro" id="IPR020084">
    <property type="entry name" value="NUDIX_hydrolase_CS"/>
</dbReference>
<dbReference type="InterPro" id="IPR000086">
    <property type="entry name" value="NUDIX_hydrolase_dom"/>
</dbReference>
<dbReference type="InterPro" id="IPR022927">
    <property type="entry name" value="RppH"/>
</dbReference>
<dbReference type="NCBIfam" id="NF001935">
    <property type="entry name" value="PRK00714.1-2"/>
    <property type="match status" value="1"/>
</dbReference>
<dbReference type="NCBIfam" id="NF001937">
    <property type="entry name" value="PRK00714.1-4"/>
    <property type="match status" value="1"/>
</dbReference>
<dbReference type="NCBIfam" id="NF001938">
    <property type="entry name" value="PRK00714.1-5"/>
    <property type="match status" value="1"/>
</dbReference>
<dbReference type="PANTHER" id="PTHR43736">
    <property type="entry name" value="ADP-RIBOSE PYROPHOSPHATASE"/>
    <property type="match status" value="1"/>
</dbReference>
<dbReference type="PANTHER" id="PTHR43736:SF1">
    <property type="entry name" value="DIHYDRONEOPTERIN TRIPHOSPHATE DIPHOSPHATASE"/>
    <property type="match status" value="1"/>
</dbReference>
<dbReference type="Pfam" id="PF00293">
    <property type="entry name" value="NUDIX"/>
    <property type="match status" value="1"/>
</dbReference>
<dbReference type="PRINTS" id="PR00502">
    <property type="entry name" value="NUDIXFAMILY"/>
</dbReference>
<dbReference type="SUPFAM" id="SSF55811">
    <property type="entry name" value="Nudix"/>
    <property type="match status" value="1"/>
</dbReference>
<dbReference type="PROSITE" id="PS51462">
    <property type="entry name" value="NUDIX"/>
    <property type="match status" value="1"/>
</dbReference>
<dbReference type="PROSITE" id="PS00893">
    <property type="entry name" value="NUDIX_BOX"/>
    <property type="match status" value="1"/>
</dbReference>
<reference key="1">
    <citation type="journal article" date="2005" name="BMC Genomics">
        <title>Bacterial genome adaptation to niches: divergence of the potential virulence genes in three Burkholderia species of different survival strategies.</title>
        <authorList>
            <person name="Kim H.S."/>
            <person name="Schell M.A."/>
            <person name="Yu Y."/>
            <person name="Ulrich R.L."/>
            <person name="Sarria S.H."/>
            <person name="Nierman W.C."/>
            <person name="DeShazer D."/>
        </authorList>
    </citation>
    <scope>NUCLEOTIDE SEQUENCE [LARGE SCALE GENOMIC DNA]</scope>
    <source>
        <strain>ATCC 700388 / DSM 13276 / CCUG 48851 / CIP 106301 / E264</strain>
    </source>
</reference>
<gene>
    <name evidence="1" type="primary">rppH</name>
    <name evidence="1" type="synonym">nudH</name>
    <name type="ordered locus">BTH_I1145</name>
</gene>
<proteinExistence type="inferred from homology"/>
<sequence>MLDREGFRPNVGIILLNAHNEVFWGKRLREHSWQFPQGGIKYGETPMQAMYRELHEETGLLPEHVKIIGRTRDWLRYEVPDKFIKREVRGHYRGQKQIWFLLRMVGRDCDICLRATDHPEFDAWRWNEYWVPLDAVIEFKRDVYQLALTELSRFLRRPAQRTDKSRGPRAPRYPRVSNGHAASETPAVIDASAVCSEVEPGASTLDEIPPRLILRD</sequence>
<protein>
    <recommendedName>
        <fullName evidence="1">RNA pyrophosphohydrolase</fullName>
        <ecNumber evidence="1">3.6.1.-</ecNumber>
    </recommendedName>
    <alternativeName>
        <fullName evidence="1">(Di)nucleoside polyphosphate hydrolase</fullName>
    </alternativeName>
</protein>
<feature type="chain" id="PRO_1000021939" description="RNA pyrophosphohydrolase">
    <location>
        <begin position="1"/>
        <end position="216"/>
    </location>
</feature>
<feature type="domain" description="Nudix hydrolase" evidence="1">
    <location>
        <begin position="6"/>
        <end position="149"/>
    </location>
</feature>
<feature type="region of interest" description="Disordered" evidence="2">
    <location>
        <begin position="159"/>
        <end position="180"/>
    </location>
</feature>
<feature type="short sequence motif" description="Nudix box">
    <location>
        <begin position="38"/>
        <end position="59"/>
    </location>
</feature>
<evidence type="ECO:0000255" key="1">
    <source>
        <dbReference type="HAMAP-Rule" id="MF_00298"/>
    </source>
</evidence>
<evidence type="ECO:0000256" key="2">
    <source>
        <dbReference type="SAM" id="MobiDB-lite"/>
    </source>
</evidence>
<comment type="function">
    <text evidence="1">Accelerates the degradation of transcripts by removing pyrophosphate from the 5'-end of triphosphorylated RNA, leading to a more labile monophosphorylated state that can stimulate subsequent ribonuclease cleavage.</text>
</comment>
<comment type="cofactor">
    <cofactor evidence="1">
        <name>a divalent metal cation</name>
        <dbReference type="ChEBI" id="CHEBI:60240"/>
    </cofactor>
</comment>
<comment type="similarity">
    <text evidence="1">Belongs to the Nudix hydrolase family. RppH subfamily.</text>
</comment>
<name>RPPH_BURTA</name>